<protein>
    <recommendedName>
        <fullName>Ribonuclease E/G-like protein</fullName>
        <shortName>RNase E/G-like protein</shortName>
        <ecNumber>3.1.26.-</ecNumber>
    </recommendedName>
</protein>
<evidence type="ECO:0000250" key="1">
    <source>
        <dbReference type="UniProtKB" id="F4IV66"/>
    </source>
</evidence>
<evidence type="ECO:0000250" key="2">
    <source>
        <dbReference type="UniProtKB" id="P21513"/>
    </source>
</evidence>
<evidence type="ECO:0000305" key="3"/>
<geneLocation type="chloroplast"/>
<comment type="function">
    <text evidence="1">Involved in intercistronic processing of primary transcripts from chloroplast operons. The endonucleolytic activity of the enzyme depends on the number of phosphates at the 5' end, is inhibited by structured RNA, and preferentially cleaves A/U-rich sequences.</text>
</comment>
<comment type="cofactor">
    <cofactor evidence="2">
        <name>Mg(2+)</name>
        <dbReference type="ChEBI" id="CHEBI:18420"/>
    </cofactor>
    <text evidence="2">Binds 1 Mg(2+) ion per subunit.</text>
</comment>
<comment type="subcellular location">
    <subcellularLocation>
        <location evidence="1">Plastid</location>
        <location evidence="1">Chloroplast stroma</location>
    </subcellularLocation>
</comment>
<comment type="similarity">
    <text evidence="3">Belongs to the RNase E/G family.</text>
</comment>
<reference key="1">
    <citation type="journal article" date="1999" name="J. Mol. Evol.">
        <title>The plastid genome of the cryptophyte alga, Guillardia theta: complete sequence and conserved synteny groups confirm its common ancestry with red algae.</title>
        <authorList>
            <person name="Douglas S.E."/>
            <person name="Penny S.L."/>
        </authorList>
    </citation>
    <scope>NUCLEOTIDE SEQUENCE [LARGE SCALE GENOMIC DNA]</scope>
</reference>
<gene>
    <name type="primary">rne</name>
</gene>
<accession>O78453</accession>
<keyword id="KW-0150">Chloroplast</keyword>
<keyword id="KW-0255">Endonuclease</keyword>
<keyword id="KW-0378">Hydrolase</keyword>
<keyword id="KW-0460">Magnesium</keyword>
<keyword id="KW-0479">Metal-binding</keyword>
<keyword id="KW-0507">mRNA processing</keyword>
<keyword id="KW-0540">Nuclease</keyword>
<keyword id="KW-0934">Plastid</keyword>
<keyword id="KW-0694">RNA-binding</keyword>
<dbReference type="EC" id="3.1.26.-"/>
<dbReference type="EMBL" id="AF041468">
    <property type="protein sequence ID" value="AAC35644.1"/>
    <property type="molecule type" value="Genomic_DNA"/>
</dbReference>
<dbReference type="RefSeq" id="NP_050710.1">
    <property type="nucleotide sequence ID" value="NC_000926.1"/>
</dbReference>
<dbReference type="SMR" id="O78453"/>
<dbReference type="GeneID" id="857011"/>
<dbReference type="HOGENOM" id="CLU_640066_0_0_1"/>
<dbReference type="OMA" id="HANHITD"/>
<dbReference type="GO" id="GO:0009570">
    <property type="term" value="C:chloroplast stroma"/>
    <property type="evidence" value="ECO:0007669"/>
    <property type="project" value="UniProtKB-SubCell"/>
</dbReference>
<dbReference type="GO" id="GO:0004519">
    <property type="term" value="F:endonuclease activity"/>
    <property type="evidence" value="ECO:0007669"/>
    <property type="project" value="UniProtKB-KW"/>
</dbReference>
<dbReference type="GO" id="GO:0046872">
    <property type="term" value="F:metal ion binding"/>
    <property type="evidence" value="ECO:0007669"/>
    <property type="project" value="UniProtKB-KW"/>
</dbReference>
<dbReference type="GO" id="GO:0003723">
    <property type="term" value="F:RNA binding"/>
    <property type="evidence" value="ECO:0007669"/>
    <property type="project" value="UniProtKB-KW"/>
</dbReference>
<dbReference type="GO" id="GO:0004540">
    <property type="term" value="F:RNA nuclease activity"/>
    <property type="evidence" value="ECO:0007669"/>
    <property type="project" value="InterPro"/>
</dbReference>
<dbReference type="GO" id="GO:0006397">
    <property type="term" value="P:mRNA processing"/>
    <property type="evidence" value="ECO:0007669"/>
    <property type="project" value="UniProtKB-KW"/>
</dbReference>
<dbReference type="GO" id="GO:0006364">
    <property type="term" value="P:rRNA processing"/>
    <property type="evidence" value="ECO:0007669"/>
    <property type="project" value="TreeGrafter"/>
</dbReference>
<dbReference type="Gene3D" id="2.40.50.140">
    <property type="entry name" value="Nucleic acid-binding proteins"/>
    <property type="match status" value="1"/>
</dbReference>
<dbReference type="InterPro" id="IPR012340">
    <property type="entry name" value="NA-bd_OB-fold"/>
</dbReference>
<dbReference type="InterPro" id="IPR019307">
    <property type="entry name" value="RNA-bd_AU-1/RNase_E/G"/>
</dbReference>
<dbReference type="InterPro" id="IPR004659">
    <property type="entry name" value="RNase_E/G"/>
</dbReference>
<dbReference type="PANTHER" id="PTHR30001">
    <property type="entry name" value="RIBONUCLEASE"/>
    <property type="match status" value="1"/>
</dbReference>
<dbReference type="PANTHER" id="PTHR30001:SF0">
    <property type="entry name" value="RIBONUCLEASE G"/>
    <property type="match status" value="1"/>
</dbReference>
<dbReference type="Pfam" id="PF10150">
    <property type="entry name" value="RNase_E_G"/>
    <property type="match status" value="1"/>
</dbReference>
<sequence>MSFNIIILKELGFSLVFSQSKCEYIIFQKEQCGLNDIYFGFIPRQSIYPTLNAAFVTLDSERNQGFIPFTLLIKKSNQQFVIPNSVFLIQVIKEPTINKPATLTSHIFLNSFNLNLQFSGIDCKYLNLYPNIKFLHICLITLLIPSGLDINFDHSMKDILYLDLIGQSKILYYSFSNLFTKLLRIKKMPQFIFRNSNFFLPILNKLSLSSINDFFVSSYQRAVYLRHFLITHYFTIKQTDYRILFYPTAYKSMQLYYLDMLFYRSLKPIVYTLYGIFIVICKTEALISIDVNSGSHSSRVSQNLSLHTNLIASKSIIKEIKLRNLAGVIVIDFVDMIHQKDQIHLLAFFRYLLNINSVMITLIQLSDIGLLELTRKRQDQSIYDVFQIGNISKSSFLYDRILSLNKNLFKTNLLINYTLFSNVKLIYNY</sequence>
<name>RNE_GUITH</name>
<organism>
    <name type="scientific">Guillardia theta</name>
    <name type="common">Cryptophyte</name>
    <name type="synonym">Cryptomonas phi</name>
    <dbReference type="NCBI Taxonomy" id="55529"/>
    <lineage>
        <taxon>Eukaryota</taxon>
        <taxon>Cryptophyceae</taxon>
        <taxon>Pyrenomonadales</taxon>
        <taxon>Geminigeraceae</taxon>
        <taxon>Guillardia</taxon>
    </lineage>
</organism>
<proteinExistence type="inferred from homology"/>
<feature type="chain" id="PRO_0000097374" description="Ribonuclease E/G-like protein">
    <location>
        <begin position="1"/>
        <end position="429"/>
    </location>
</feature>
<feature type="binding site" evidence="2">
    <location>
        <position position="290"/>
    </location>
    <ligand>
        <name>Mg(2+)</name>
        <dbReference type="ChEBI" id="CHEBI:18420"/>
        <note>catalytic</note>
    </ligand>
</feature>
<feature type="binding site" evidence="2">
    <location>
        <position position="332"/>
    </location>
    <ligand>
        <name>Mg(2+)</name>
        <dbReference type="ChEBI" id="CHEBI:18420"/>
        <note>catalytic</note>
    </ligand>
</feature>